<protein>
    <recommendedName>
        <fullName evidence="1">Lysophospholipid transporter LplT</fullName>
    </recommendedName>
</protein>
<gene>
    <name evidence="1" type="primary">lplT</name>
    <name type="ordered locus">EcHS_A2982</name>
</gene>
<reference key="1">
    <citation type="journal article" date="2008" name="J. Bacteriol.">
        <title>The pangenome structure of Escherichia coli: comparative genomic analysis of E. coli commensal and pathogenic isolates.</title>
        <authorList>
            <person name="Rasko D.A."/>
            <person name="Rosovitz M.J."/>
            <person name="Myers G.S.A."/>
            <person name="Mongodin E.F."/>
            <person name="Fricke W.F."/>
            <person name="Gajer P."/>
            <person name="Crabtree J."/>
            <person name="Sebaihia M."/>
            <person name="Thomson N.R."/>
            <person name="Chaudhuri R."/>
            <person name="Henderson I.R."/>
            <person name="Sperandio V."/>
            <person name="Ravel J."/>
        </authorList>
    </citation>
    <scope>NUCLEOTIDE SEQUENCE [LARGE SCALE GENOMIC DNA]</scope>
    <source>
        <strain>HS</strain>
    </source>
</reference>
<dbReference type="EMBL" id="CP000802">
    <property type="protein sequence ID" value="ABV07223.1"/>
    <property type="molecule type" value="Genomic_DNA"/>
</dbReference>
<dbReference type="RefSeq" id="WP_000004612.1">
    <property type="nucleotide sequence ID" value="NC_009800.1"/>
</dbReference>
<dbReference type="SMR" id="A8A3W9"/>
<dbReference type="KEGG" id="ecx:EcHS_A2982"/>
<dbReference type="HOGENOM" id="CLU_047399_0_0_6"/>
<dbReference type="GO" id="GO:0005886">
    <property type="term" value="C:plasma membrane"/>
    <property type="evidence" value="ECO:0007669"/>
    <property type="project" value="UniProtKB-SubCell"/>
</dbReference>
<dbReference type="GO" id="GO:0051978">
    <property type="term" value="F:lysophospholipid:sodium symporter activity"/>
    <property type="evidence" value="ECO:0007669"/>
    <property type="project" value="InterPro"/>
</dbReference>
<dbReference type="CDD" id="cd06173">
    <property type="entry name" value="MFS_MefA_like"/>
    <property type="match status" value="1"/>
</dbReference>
<dbReference type="FunFam" id="1.20.1250.20:FF:000091">
    <property type="entry name" value="Lysophospholipid transporter LplT"/>
    <property type="match status" value="1"/>
</dbReference>
<dbReference type="Gene3D" id="1.20.1250.20">
    <property type="entry name" value="MFS general substrate transporter like domains"/>
    <property type="match status" value="1"/>
</dbReference>
<dbReference type="HAMAP" id="MF_01585">
    <property type="entry name" value="MFS_LplT"/>
    <property type="match status" value="1"/>
</dbReference>
<dbReference type="InterPro" id="IPR023727">
    <property type="entry name" value="LysoPLipid__transptr_LplT"/>
</dbReference>
<dbReference type="InterPro" id="IPR011701">
    <property type="entry name" value="MFS"/>
</dbReference>
<dbReference type="InterPro" id="IPR036259">
    <property type="entry name" value="MFS_trans_sf"/>
</dbReference>
<dbReference type="NCBIfam" id="NF008397">
    <property type="entry name" value="PRK11195.1"/>
    <property type="match status" value="1"/>
</dbReference>
<dbReference type="PANTHER" id="PTHR43266">
    <property type="entry name" value="MACROLIDE-EFFLUX PROTEIN"/>
    <property type="match status" value="1"/>
</dbReference>
<dbReference type="PANTHER" id="PTHR43266:SF2">
    <property type="entry name" value="MAJOR FACILITATOR SUPERFAMILY (MFS) PROFILE DOMAIN-CONTAINING PROTEIN"/>
    <property type="match status" value="1"/>
</dbReference>
<dbReference type="Pfam" id="PF07690">
    <property type="entry name" value="MFS_1"/>
    <property type="match status" value="1"/>
</dbReference>
<dbReference type="SUPFAM" id="SSF103473">
    <property type="entry name" value="MFS general substrate transporter"/>
    <property type="match status" value="1"/>
</dbReference>
<organism>
    <name type="scientific">Escherichia coli O9:H4 (strain HS)</name>
    <dbReference type="NCBI Taxonomy" id="331112"/>
    <lineage>
        <taxon>Bacteria</taxon>
        <taxon>Pseudomonadati</taxon>
        <taxon>Pseudomonadota</taxon>
        <taxon>Gammaproteobacteria</taxon>
        <taxon>Enterobacterales</taxon>
        <taxon>Enterobacteriaceae</taxon>
        <taxon>Escherichia</taxon>
    </lineage>
</organism>
<evidence type="ECO:0000255" key="1">
    <source>
        <dbReference type="HAMAP-Rule" id="MF_01585"/>
    </source>
</evidence>
<sequence>MSESVHTNTSLWSKGMKAVIVAQFLSAFGDNALLFATLALLKAQFYPEWSQPILQMVFVGAYILFAPFVGQVADSFAKGRVMMFANGLKLLGAASICFGINPFLGYTLVGVGAAAYSPAKYGILGELTTGSKLVKANGLMEASTIAAILLGSVAGGVLADWHVLVALAACALAYGGAVVANIYIPKLAAARPGQSWNLINMTRSFLNACTSLWRNGETRFSLVGTSLFWGAGVTLRFLLVLWVPVALGITDNATPTYLNAMVAIGIVVGAGAAAKLVTLETVSRCMPAGILIGVVVLIFSLQHELLPAYALLMLIGVLGGFFVVPLNALLQERGKKSVGAGNAIAVQNLGENSAMLLMLGIYSLAVMVGIPVVPIGIGFGTLFALAITALWIWQRRH</sequence>
<accession>A8A3W9</accession>
<comment type="function">
    <text evidence="1">Catalyzes the facilitated diffusion of 2-acyl-glycero-3-phosphoethanolamine (2-acyl-GPE) into the cell.</text>
</comment>
<comment type="subcellular location">
    <subcellularLocation>
        <location evidence="1">Cell inner membrane</location>
        <topology evidence="1">Multi-pass membrane protein</topology>
    </subcellularLocation>
</comment>
<comment type="similarity">
    <text evidence="1">Belongs to the major facilitator superfamily. LplT (TC 2.A.1.42) family.</text>
</comment>
<keyword id="KW-0997">Cell inner membrane</keyword>
<keyword id="KW-1003">Cell membrane</keyword>
<keyword id="KW-0445">Lipid transport</keyword>
<keyword id="KW-0472">Membrane</keyword>
<keyword id="KW-0812">Transmembrane</keyword>
<keyword id="KW-1133">Transmembrane helix</keyword>
<keyword id="KW-0813">Transport</keyword>
<name>LPLT_ECOHS</name>
<feature type="chain" id="PRO_1000069309" description="Lysophospholipid transporter LplT">
    <location>
        <begin position="1"/>
        <end position="397"/>
    </location>
</feature>
<feature type="topological domain" description="Periplasmic" evidence="1">
    <location>
        <begin position="1"/>
        <end position="17"/>
    </location>
</feature>
<feature type="transmembrane region" description="Helical" evidence="1">
    <location>
        <begin position="18"/>
        <end position="38"/>
    </location>
</feature>
<feature type="topological domain" description="Cytoplasmic" evidence="1">
    <location>
        <begin position="39"/>
        <end position="52"/>
    </location>
</feature>
<feature type="transmembrane region" description="Helical" evidence="1">
    <location>
        <begin position="53"/>
        <end position="73"/>
    </location>
</feature>
<feature type="topological domain" description="Periplasmic" evidence="1">
    <location>
        <begin position="74"/>
        <end position="90"/>
    </location>
</feature>
<feature type="transmembrane region" description="Helical" evidence="1">
    <location>
        <begin position="91"/>
        <end position="111"/>
    </location>
</feature>
<feature type="topological domain" description="Cytoplasmic" evidence="1">
    <location>
        <begin position="112"/>
        <end position="144"/>
    </location>
</feature>
<feature type="transmembrane region" description="Helical" evidence="1">
    <location>
        <begin position="145"/>
        <end position="165"/>
    </location>
</feature>
<feature type="topological domain" description="Periplasmic" evidence="1">
    <location>
        <position position="166"/>
    </location>
</feature>
<feature type="transmembrane region" description="Helical" evidence="1">
    <location>
        <begin position="167"/>
        <end position="187"/>
    </location>
</feature>
<feature type="topological domain" description="Cytoplasmic" evidence="1">
    <location>
        <begin position="188"/>
        <end position="226"/>
    </location>
</feature>
<feature type="transmembrane region" description="Helical" evidence="1">
    <location>
        <begin position="227"/>
        <end position="247"/>
    </location>
</feature>
<feature type="topological domain" description="Periplasmic" evidence="1">
    <location>
        <begin position="248"/>
        <end position="256"/>
    </location>
</feature>
<feature type="transmembrane region" description="Helical" evidence="1">
    <location>
        <begin position="257"/>
        <end position="277"/>
    </location>
</feature>
<feature type="topological domain" description="Cytoplasmic" evidence="1">
    <location>
        <begin position="278"/>
        <end position="280"/>
    </location>
</feature>
<feature type="transmembrane region" description="Helical" evidence="1">
    <location>
        <begin position="281"/>
        <end position="301"/>
    </location>
</feature>
<feature type="topological domain" description="Periplasmic" evidence="1">
    <location>
        <begin position="302"/>
        <end position="304"/>
    </location>
</feature>
<feature type="transmembrane region" description="Helical" evidence="1">
    <location>
        <begin position="305"/>
        <end position="325"/>
    </location>
</feature>
<feature type="topological domain" description="Cytoplasmic" evidence="1">
    <location>
        <begin position="326"/>
        <end position="343"/>
    </location>
</feature>
<feature type="transmembrane region" description="Helical" evidence="1">
    <location>
        <begin position="344"/>
        <end position="364"/>
    </location>
</feature>
<feature type="topological domain" description="Periplasmic" evidence="1">
    <location>
        <begin position="365"/>
        <end position="366"/>
    </location>
</feature>
<feature type="transmembrane region" description="Helical" evidence="1">
    <location>
        <begin position="367"/>
        <end position="387"/>
    </location>
</feature>
<feature type="topological domain" description="Cytoplasmic" evidence="1">
    <location>
        <begin position="388"/>
        <end position="397"/>
    </location>
</feature>
<proteinExistence type="inferred from homology"/>